<proteinExistence type="evidence at transcript level"/>
<organism>
    <name type="scientific">Zea mays</name>
    <name type="common">Maize</name>
    <dbReference type="NCBI Taxonomy" id="4577"/>
    <lineage>
        <taxon>Eukaryota</taxon>
        <taxon>Viridiplantae</taxon>
        <taxon>Streptophyta</taxon>
        <taxon>Embryophyta</taxon>
        <taxon>Tracheophyta</taxon>
        <taxon>Spermatophyta</taxon>
        <taxon>Magnoliopsida</taxon>
        <taxon>Liliopsida</taxon>
        <taxon>Poales</taxon>
        <taxon>Poaceae</taxon>
        <taxon>PACMAD clade</taxon>
        <taxon>Panicoideae</taxon>
        <taxon>Andropogonodae</taxon>
        <taxon>Andropogoneae</taxon>
        <taxon>Tripsacinae</taxon>
        <taxon>Zea</taxon>
    </lineage>
</organism>
<gene>
    <name type="primary">CYP78A1</name>
    <name type="synonym">CYP78</name>
</gene>
<accession>P48420</accession>
<protein>
    <recommendedName>
        <fullName>Cytochrome P450 78A1</fullName>
        <ecNumber>1.14.-.-</ecNumber>
    </recommendedName>
    <alternativeName>
        <fullName>CYPLXXVIII</fullName>
    </alternativeName>
</protein>
<evidence type="ECO:0000250" key="1"/>
<evidence type="ECO:0000256" key="2">
    <source>
        <dbReference type="SAM" id="MobiDB-lite"/>
    </source>
</evidence>
<evidence type="ECO:0000305" key="3"/>
<keyword id="KW-0349">Heme</keyword>
<keyword id="KW-0408">Iron</keyword>
<keyword id="KW-0479">Metal-binding</keyword>
<keyword id="KW-0503">Monooxygenase</keyword>
<keyword id="KW-0560">Oxidoreductase</keyword>
<keyword id="KW-1185">Reference proteome</keyword>
<reference key="1">
    <citation type="journal article" date="1994" name="Plant Mol. Biol.">
        <title>Isolation of a cytochrome P450 homologue preferentially expressed in developing inflorescences of Zea mays.</title>
        <authorList>
            <person name="Larkin J.C."/>
        </authorList>
    </citation>
    <scope>NUCLEOTIDE SEQUENCE [MRNA]</scope>
    <source>
        <tissue>Flower</tissue>
    </source>
</reference>
<feature type="chain" id="PRO_0000052148" description="Cytochrome P450 78A1">
    <location>
        <begin position="1"/>
        <end position="547"/>
    </location>
</feature>
<feature type="region of interest" description="Disordered" evidence="2">
    <location>
        <begin position="84"/>
        <end position="104"/>
    </location>
</feature>
<feature type="compositionally biased region" description="Low complexity" evidence="2">
    <location>
        <begin position="84"/>
        <end position="94"/>
    </location>
</feature>
<feature type="binding site" description="axial binding residue" evidence="1">
    <location>
        <position position="490"/>
    </location>
    <ligand>
        <name>heme</name>
        <dbReference type="ChEBI" id="CHEBI:30413"/>
    </ligand>
    <ligandPart>
        <name>Fe</name>
        <dbReference type="ChEBI" id="CHEBI:18248"/>
    </ligandPart>
</feature>
<name>C78A1_MAIZE</name>
<comment type="cofactor">
    <cofactor evidence="1">
        <name>heme</name>
        <dbReference type="ChEBI" id="CHEBI:30413"/>
    </cofactor>
</comment>
<comment type="tissue specificity">
    <text>Shoot apex.</text>
</comment>
<comment type="similarity">
    <text evidence="3">Belongs to the cytochrome P450 family.</text>
</comment>
<sequence>MAMASAACSCTDGTWWVYALPALLGSDTLCAHPALLAGLIFLATVSVALLAWATSPGGPAWTNGRGASASLLSWDPVVCPCSAASSRCPGAAAPRPRRDGPRRRPRAKELMAFSVGDTPAVVSSCPATAREVLAHPSFADRPVKRSARELMFARAIGFAPNGEYWRRLRRVASTHLFSPRRVASHEPGRQGDAEAMLRSIAAEQSASGAVALRPHLQAAALNNIMGSVFGTRYDVTSGAGAAEAEHLKSMVREGFELLGAFNWSDHLPWLAHLYDPSNVTRRCAALVPRVQTFVRGVIDEHRRRRQNSAALNDNADFVDVLLSLEGDEKLGDDDMVAILWEMVFRGTDTTALLTEWCMAELVRHPAVQARVRAEVDAAVGAGGCPTDADVARMPYLQAVVKETLRAHPPGPLLSWARLATADVPLCNGMVVPAGTTAMVNMWAITHDAAVWADPDAFAPERFLPSEGGADVDVRGVDLRLAPFGAGRRVCPGKNLGLTTVGLWVARLVHAFQWALPDGAAAVCLDEVLKLSLEMKTPLVAAAIPRTA</sequence>
<dbReference type="EC" id="1.14.-.-"/>
<dbReference type="EMBL" id="L23209">
    <property type="protein sequence ID" value="AAA61607.1"/>
    <property type="molecule type" value="mRNA"/>
</dbReference>
<dbReference type="PIR" id="S51475">
    <property type="entry name" value="S51475"/>
</dbReference>
<dbReference type="SMR" id="P48420"/>
<dbReference type="FunCoup" id="P48420">
    <property type="interactions" value="128"/>
</dbReference>
<dbReference type="STRING" id="4577.P48420"/>
<dbReference type="PaxDb" id="4577-GRMZM2G167986_P01"/>
<dbReference type="KEGG" id="ag:AAA61607"/>
<dbReference type="MaizeGDB" id="51340"/>
<dbReference type="eggNOG" id="KOG0156">
    <property type="taxonomic scope" value="Eukaryota"/>
</dbReference>
<dbReference type="InParanoid" id="P48420"/>
<dbReference type="Proteomes" id="UP000007305">
    <property type="component" value="Unplaced"/>
</dbReference>
<dbReference type="ExpressionAtlas" id="P48420">
    <property type="expression patterns" value="differential"/>
</dbReference>
<dbReference type="GO" id="GO:0020037">
    <property type="term" value="F:heme binding"/>
    <property type="evidence" value="ECO:0007669"/>
    <property type="project" value="InterPro"/>
</dbReference>
<dbReference type="GO" id="GO:0005506">
    <property type="term" value="F:iron ion binding"/>
    <property type="evidence" value="ECO:0007669"/>
    <property type="project" value="InterPro"/>
</dbReference>
<dbReference type="GO" id="GO:0004497">
    <property type="term" value="F:monooxygenase activity"/>
    <property type="evidence" value="ECO:0007669"/>
    <property type="project" value="UniProtKB-KW"/>
</dbReference>
<dbReference type="GO" id="GO:0016705">
    <property type="term" value="F:oxidoreductase activity, acting on paired donors, with incorporation or reduction of molecular oxygen"/>
    <property type="evidence" value="ECO:0007669"/>
    <property type="project" value="InterPro"/>
</dbReference>
<dbReference type="CDD" id="cd11076">
    <property type="entry name" value="CYP78"/>
    <property type="match status" value="1"/>
</dbReference>
<dbReference type="FunFam" id="1.10.630.10:FF:000016">
    <property type="entry name" value="Cytochrome P450 78A5"/>
    <property type="match status" value="1"/>
</dbReference>
<dbReference type="Gene3D" id="1.10.630.10">
    <property type="entry name" value="Cytochrome P450"/>
    <property type="match status" value="1"/>
</dbReference>
<dbReference type="InterPro" id="IPR001128">
    <property type="entry name" value="Cyt_P450"/>
</dbReference>
<dbReference type="InterPro" id="IPR017972">
    <property type="entry name" value="Cyt_P450_CS"/>
</dbReference>
<dbReference type="InterPro" id="IPR002401">
    <property type="entry name" value="Cyt_P450_E_grp-I"/>
</dbReference>
<dbReference type="InterPro" id="IPR036396">
    <property type="entry name" value="Cyt_P450_sf"/>
</dbReference>
<dbReference type="InterPro" id="IPR051996">
    <property type="entry name" value="Cytochrome_P450_78A"/>
</dbReference>
<dbReference type="PANTHER" id="PTHR47946:SF6">
    <property type="entry name" value="CYTOCHROME P450 78A7"/>
    <property type="match status" value="1"/>
</dbReference>
<dbReference type="PANTHER" id="PTHR47946">
    <property type="entry name" value="CYTOCHROME P450 78A7-RELATED"/>
    <property type="match status" value="1"/>
</dbReference>
<dbReference type="Pfam" id="PF00067">
    <property type="entry name" value="p450"/>
    <property type="match status" value="1"/>
</dbReference>
<dbReference type="PRINTS" id="PR00463">
    <property type="entry name" value="EP450I"/>
</dbReference>
<dbReference type="PRINTS" id="PR00385">
    <property type="entry name" value="P450"/>
</dbReference>
<dbReference type="SUPFAM" id="SSF48264">
    <property type="entry name" value="Cytochrome P450"/>
    <property type="match status" value="1"/>
</dbReference>
<dbReference type="PROSITE" id="PS00086">
    <property type="entry name" value="CYTOCHROME_P450"/>
    <property type="match status" value="1"/>
</dbReference>